<name>RPOY_BACAH</name>
<feature type="chain" id="PRO_1000068863" description="DNA-directed RNA polymerase subunit epsilon">
    <location>
        <begin position="1"/>
        <end position="70"/>
    </location>
</feature>
<organism>
    <name type="scientific">Bacillus thuringiensis (strain Al Hakam)</name>
    <dbReference type="NCBI Taxonomy" id="412694"/>
    <lineage>
        <taxon>Bacteria</taxon>
        <taxon>Bacillati</taxon>
        <taxon>Bacillota</taxon>
        <taxon>Bacilli</taxon>
        <taxon>Bacillales</taxon>
        <taxon>Bacillaceae</taxon>
        <taxon>Bacillus</taxon>
        <taxon>Bacillus cereus group</taxon>
    </lineage>
</organism>
<evidence type="ECO:0000255" key="1">
    <source>
        <dbReference type="HAMAP-Rule" id="MF_01553"/>
    </source>
</evidence>
<protein>
    <recommendedName>
        <fullName evidence="1">DNA-directed RNA polymerase subunit epsilon</fullName>
        <shortName evidence="1">RNAP epsilon subunit</shortName>
        <ecNumber evidence="1">2.7.7.6</ecNumber>
    </recommendedName>
    <alternativeName>
        <fullName evidence="1">RNA polymerase epsilon subunit</fullName>
    </alternativeName>
    <alternativeName>
        <fullName evidence="1">Transcriptase subunit epsilon</fullName>
    </alternativeName>
</protein>
<comment type="function">
    <text evidence="1">A non-essential component of RNA polymerase (RNAP).</text>
</comment>
<comment type="catalytic activity">
    <reaction evidence="1">
        <text>RNA(n) + a ribonucleoside 5'-triphosphate = RNA(n+1) + diphosphate</text>
        <dbReference type="Rhea" id="RHEA:21248"/>
        <dbReference type="Rhea" id="RHEA-COMP:14527"/>
        <dbReference type="Rhea" id="RHEA-COMP:17342"/>
        <dbReference type="ChEBI" id="CHEBI:33019"/>
        <dbReference type="ChEBI" id="CHEBI:61557"/>
        <dbReference type="ChEBI" id="CHEBI:140395"/>
        <dbReference type="EC" id="2.7.7.6"/>
    </reaction>
</comment>
<comment type="subunit">
    <text evidence="1">RNAP is composed of a core of 2 alpha, a beta and a beta' subunit. The core is associated with a delta subunit, and at least one of epsilon or omega. When a sigma factor is associated with the core the holoenzyme is formed, which can initiate transcription.</text>
</comment>
<comment type="similarity">
    <text evidence="1">Belongs to the RNA polymerase subunit epsilon family.</text>
</comment>
<reference key="1">
    <citation type="journal article" date="2007" name="J. Bacteriol.">
        <title>The complete genome sequence of Bacillus thuringiensis Al Hakam.</title>
        <authorList>
            <person name="Challacombe J.F."/>
            <person name="Altherr M.R."/>
            <person name="Xie G."/>
            <person name="Bhotika S.S."/>
            <person name="Brown N."/>
            <person name="Bruce D."/>
            <person name="Campbell C.S."/>
            <person name="Campbell M.L."/>
            <person name="Chen J."/>
            <person name="Chertkov O."/>
            <person name="Cleland C."/>
            <person name="Dimitrijevic M."/>
            <person name="Doggett N.A."/>
            <person name="Fawcett J.J."/>
            <person name="Glavina T."/>
            <person name="Goodwin L.A."/>
            <person name="Green L.D."/>
            <person name="Han C.S."/>
            <person name="Hill K.K."/>
            <person name="Hitchcock P."/>
            <person name="Jackson P.J."/>
            <person name="Keim P."/>
            <person name="Kewalramani A.R."/>
            <person name="Longmire J."/>
            <person name="Lucas S."/>
            <person name="Malfatti S."/>
            <person name="Martinez D."/>
            <person name="McMurry K."/>
            <person name="Meincke L.J."/>
            <person name="Misra M."/>
            <person name="Moseman B.L."/>
            <person name="Mundt M."/>
            <person name="Munk A.C."/>
            <person name="Okinaka R.T."/>
            <person name="Parson-Quintana B."/>
            <person name="Reilly L.P."/>
            <person name="Richardson P."/>
            <person name="Robinson D.L."/>
            <person name="Saunders E."/>
            <person name="Tapia R."/>
            <person name="Tesmer J.G."/>
            <person name="Thayer N."/>
            <person name="Thompson L.S."/>
            <person name="Tice H."/>
            <person name="Ticknor L.O."/>
            <person name="Wills P.L."/>
            <person name="Gilna P."/>
            <person name="Brettin T.S."/>
        </authorList>
    </citation>
    <scope>NUCLEOTIDE SEQUENCE [LARGE SCALE GENOMIC DNA]</scope>
    <source>
        <strain>Al Hakam</strain>
    </source>
</reference>
<gene>
    <name evidence="1" type="primary">rpoY</name>
    <name type="ordered locus">BALH_3598</name>
</gene>
<sequence>MIFKVFYQEKMTEVPVRENTKVLYLEATSEKDVRTKLNKFAYNIEFVQSVTGNHLEYEKANADLTLAEIV</sequence>
<accession>A0RHY8</accession>
<proteinExistence type="inferred from homology"/>
<keyword id="KW-0240">DNA-directed RNA polymerase</keyword>
<keyword id="KW-0548">Nucleotidyltransferase</keyword>
<keyword id="KW-0804">Transcription</keyword>
<keyword id="KW-0808">Transferase</keyword>
<dbReference type="EC" id="2.7.7.6" evidence="1"/>
<dbReference type="EMBL" id="CP000485">
    <property type="protein sequence ID" value="ABK86831.1"/>
    <property type="molecule type" value="Genomic_DNA"/>
</dbReference>
<dbReference type="RefSeq" id="WP_000576443.1">
    <property type="nucleotide sequence ID" value="NC_008600.1"/>
</dbReference>
<dbReference type="SMR" id="A0RHY8"/>
<dbReference type="KEGG" id="btl:BALH_3598"/>
<dbReference type="HOGENOM" id="CLU_187518_0_0_9"/>
<dbReference type="GO" id="GO:0000428">
    <property type="term" value="C:DNA-directed RNA polymerase complex"/>
    <property type="evidence" value="ECO:0007669"/>
    <property type="project" value="UniProtKB-KW"/>
</dbReference>
<dbReference type="GO" id="GO:0003677">
    <property type="term" value="F:DNA binding"/>
    <property type="evidence" value="ECO:0007669"/>
    <property type="project" value="UniProtKB-UniRule"/>
</dbReference>
<dbReference type="GO" id="GO:0003899">
    <property type="term" value="F:DNA-directed RNA polymerase activity"/>
    <property type="evidence" value="ECO:0007669"/>
    <property type="project" value="UniProtKB-UniRule"/>
</dbReference>
<dbReference type="GO" id="GO:0006351">
    <property type="term" value="P:DNA-templated transcription"/>
    <property type="evidence" value="ECO:0007669"/>
    <property type="project" value="UniProtKB-UniRule"/>
</dbReference>
<dbReference type="Gene3D" id="3.10.20.730">
    <property type="entry name" value="RNAP, epsilon subunit-like"/>
    <property type="match status" value="1"/>
</dbReference>
<dbReference type="HAMAP" id="MF_01553">
    <property type="entry name" value="RNApol_bact_RpoY"/>
    <property type="match status" value="1"/>
</dbReference>
<dbReference type="InterPro" id="IPR009907">
    <property type="entry name" value="RpoY"/>
</dbReference>
<dbReference type="NCBIfam" id="NF010188">
    <property type="entry name" value="PRK13667.1"/>
    <property type="match status" value="1"/>
</dbReference>
<dbReference type="Pfam" id="PF07288">
    <property type="entry name" value="RpoY"/>
    <property type="match status" value="1"/>
</dbReference>